<protein>
    <recommendedName>
        <fullName>LIM/homeobox protein Lhx4</fullName>
        <shortName>LIM homeobox protein 4</shortName>
    </recommendedName>
</protein>
<proteinExistence type="evidence at protein level"/>
<gene>
    <name type="primary">Lhx4</name>
    <name type="synonym">Gsh-4</name>
    <name type="synonym">Gsh4</name>
</gene>
<name>LHX4_MOUSE</name>
<comment type="function">
    <text evidence="1">May play a critical role in the development of respiratory control mechanisms and in the normal growth and maturation of the lung. Binds preferentially to methylated DNA (By similarity).</text>
</comment>
<comment type="subcellular location">
    <subcellularLocation>
        <location evidence="2">Nucleus</location>
    </subcellularLocation>
</comment>
<comment type="tissue specificity">
    <text>Transient expression in ventrolateral regions of the developing neural tube and hindbrain.</text>
</comment>
<comment type="sequence caution" evidence="5">
    <conflict type="erroneous initiation">
        <sequence resource="EMBL-CDS" id="AAD30125"/>
    </conflict>
</comment>
<organism>
    <name type="scientific">Mus musculus</name>
    <name type="common">Mouse</name>
    <dbReference type="NCBI Taxonomy" id="10090"/>
    <lineage>
        <taxon>Eukaryota</taxon>
        <taxon>Metazoa</taxon>
        <taxon>Chordata</taxon>
        <taxon>Craniata</taxon>
        <taxon>Vertebrata</taxon>
        <taxon>Euteleostomi</taxon>
        <taxon>Mammalia</taxon>
        <taxon>Eutheria</taxon>
        <taxon>Euarchontoglires</taxon>
        <taxon>Glires</taxon>
        <taxon>Rodentia</taxon>
        <taxon>Myomorpha</taxon>
        <taxon>Muroidea</taxon>
        <taxon>Muridae</taxon>
        <taxon>Murinae</taxon>
        <taxon>Mus</taxon>
        <taxon>Mus</taxon>
    </lineage>
</organism>
<evidence type="ECO:0000250" key="1">
    <source>
        <dbReference type="UniProtKB" id="Q969G2"/>
    </source>
</evidence>
<evidence type="ECO:0000255" key="2">
    <source>
        <dbReference type="PROSITE-ProRule" id="PRU00108"/>
    </source>
</evidence>
<evidence type="ECO:0000255" key="3">
    <source>
        <dbReference type="PROSITE-ProRule" id="PRU00125"/>
    </source>
</evidence>
<evidence type="ECO:0000256" key="4">
    <source>
        <dbReference type="SAM" id="MobiDB-lite"/>
    </source>
</evidence>
<evidence type="ECO:0000305" key="5"/>
<evidence type="ECO:0007829" key="6">
    <source>
        <dbReference type="PDB" id="6CME"/>
    </source>
</evidence>
<dbReference type="EMBL" id="BC049834">
    <property type="protein sequence ID" value="AAH49834.1"/>
    <property type="molecule type" value="mRNA"/>
</dbReference>
<dbReference type="EMBL" id="AF135415">
    <property type="protein sequence ID" value="AAD30125.1"/>
    <property type="status" value="ALT_INIT"/>
    <property type="molecule type" value="mRNA"/>
</dbReference>
<dbReference type="EMBL" id="U89343">
    <property type="protein sequence ID" value="AAC53336.1"/>
    <property type="molecule type" value="mRNA"/>
</dbReference>
<dbReference type="EMBL" id="S71659">
    <property type="protein sequence ID" value="AAB31260.1"/>
    <property type="molecule type" value="mRNA"/>
</dbReference>
<dbReference type="CCDS" id="CCDS48399.1"/>
<dbReference type="PIR" id="S46332">
    <property type="entry name" value="S46332"/>
</dbReference>
<dbReference type="RefSeq" id="NP_034842.2">
    <property type="nucleotide sequence ID" value="NM_010712.2"/>
</dbReference>
<dbReference type="PDB" id="3MMK">
    <property type="method" value="X-ray"/>
    <property type="resolution" value="2.16 A"/>
    <property type="chains" value="A/B=24-149"/>
</dbReference>
<dbReference type="PDB" id="6CME">
    <property type="method" value="X-ray"/>
    <property type="resolution" value="1.92 A"/>
    <property type="chains" value="A/B=24-149"/>
</dbReference>
<dbReference type="PDBsum" id="3MMK"/>
<dbReference type="PDBsum" id="6CME"/>
<dbReference type="SASBDB" id="P53776"/>
<dbReference type="SMR" id="P53776"/>
<dbReference type="BioGRID" id="201157">
    <property type="interactions" value="3"/>
</dbReference>
<dbReference type="FunCoup" id="P53776">
    <property type="interactions" value="1402"/>
</dbReference>
<dbReference type="IntAct" id="P53776">
    <property type="interactions" value="3"/>
</dbReference>
<dbReference type="STRING" id="10090.ENSMUSP00000027740"/>
<dbReference type="GlyGen" id="P53776">
    <property type="glycosylation" value="1 site"/>
</dbReference>
<dbReference type="iPTMnet" id="P53776"/>
<dbReference type="PhosphoSitePlus" id="P53776"/>
<dbReference type="PaxDb" id="10090-ENSMUSP00000027740"/>
<dbReference type="Antibodypedia" id="20587">
    <property type="antibodies" value="395 antibodies from 29 providers"/>
</dbReference>
<dbReference type="DNASU" id="16872"/>
<dbReference type="Ensembl" id="ENSMUST00000027740.14">
    <property type="protein sequence ID" value="ENSMUSP00000027740.8"/>
    <property type="gene ID" value="ENSMUSG00000026468.15"/>
</dbReference>
<dbReference type="GeneID" id="16872"/>
<dbReference type="KEGG" id="mmu:16872"/>
<dbReference type="UCSC" id="uc007dbn.2">
    <property type="organism name" value="mouse"/>
</dbReference>
<dbReference type="AGR" id="MGI:101776"/>
<dbReference type="CTD" id="89884"/>
<dbReference type="MGI" id="MGI:101776">
    <property type="gene designation" value="Lhx4"/>
</dbReference>
<dbReference type="VEuPathDB" id="HostDB:ENSMUSG00000026468"/>
<dbReference type="eggNOG" id="KOG4577">
    <property type="taxonomic scope" value="Eukaryota"/>
</dbReference>
<dbReference type="GeneTree" id="ENSGT00940000157906"/>
<dbReference type="HOGENOM" id="CLU_027802_5_0_1"/>
<dbReference type="InParanoid" id="P53776"/>
<dbReference type="OMA" id="GLDYTMD"/>
<dbReference type="OrthoDB" id="10068367at2759"/>
<dbReference type="PhylomeDB" id="P53776"/>
<dbReference type="TreeFam" id="TF315442"/>
<dbReference type="BioGRID-ORCS" id="16872">
    <property type="hits" value="2 hits in 78 CRISPR screens"/>
</dbReference>
<dbReference type="PRO" id="PR:P53776"/>
<dbReference type="Proteomes" id="UP000000589">
    <property type="component" value="Chromosome 1"/>
</dbReference>
<dbReference type="RNAct" id="P53776">
    <property type="molecule type" value="protein"/>
</dbReference>
<dbReference type="Bgee" id="ENSMUSG00000026468">
    <property type="expression patterns" value="Expressed in pineal body and 75 other cell types or tissues"/>
</dbReference>
<dbReference type="ExpressionAtlas" id="P53776">
    <property type="expression patterns" value="baseline and differential"/>
</dbReference>
<dbReference type="GO" id="GO:0005654">
    <property type="term" value="C:nucleoplasm"/>
    <property type="evidence" value="ECO:0000304"/>
    <property type="project" value="Reactome"/>
</dbReference>
<dbReference type="GO" id="GO:0001228">
    <property type="term" value="F:DNA-binding transcription activator activity, RNA polymerase II-specific"/>
    <property type="evidence" value="ECO:0007669"/>
    <property type="project" value="Ensembl"/>
</dbReference>
<dbReference type="GO" id="GO:0008327">
    <property type="term" value="F:methyl-CpG binding"/>
    <property type="evidence" value="ECO:0000250"/>
    <property type="project" value="UniProtKB"/>
</dbReference>
<dbReference type="GO" id="GO:1990837">
    <property type="term" value="F:sequence-specific double-stranded DNA binding"/>
    <property type="evidence" value="ECO:0007669"/>
    <property type="project" value="Ensembl"/>
</dbReference>
<dbReference type="GO" id="GO:0008270">
    <property type="term" value="F:zinc ion binding"/>
    <property type="evidence" value="ECO:0007669"/>
    <property type="project" value="InterPro"/>
</dbReference>
<dbReference type="GO" id="GO:0009887">
    <property type="term" value="P:animal organ morphogenesis"/>
    <property type="evidence" value="ECO:0000315"/>
    <property type="project" value="MGI"/>
</dbReference>
<dbReference type="GO" id="GO:0006915">
    <property type="term" value="P:apoptotic process"/>
    <property type="evidence" value="ECO:0000315"/>
    <property type="project" value="MGI"/>
</dbReference>
<dbReference type="GO" id="GO:0021526">
    <property type="term" value="P:medial motor column neuron differentiation"/>
    <property type="evidence" value="ECO:0000316"/>
    <property type="project" value="MGI"/>
</dbReference>
<dbReference type="GO" id="GO:0008045">
    <property type="term" value="P:motor neuron axon guidance"/>
    <property type="evidence" value="ECO:0000316"/>
    <property type="project" value="MGI"/>
</dbReference>
<dbReference type="GO" id="GO:0043066">
    <property type="term" value="P:negative regulation of apoptotic process"/>
    <property type="evidence" value="ECO:0000315"/>
    <property type="project" value="MGI"/>
</dbReference>
<dbReference type="GO" id="GO:0001890">
    <property type="term" value="P:placenta development"/>
    <property type="evidence" value="ECO:0000316"/>
    <property type="project" value="MGI"/>
</dbReference>
<dbReference type="CDD" id="cd00086">
    <property type="entry name" value="homeodomain"/>
    <property type="match status" value="1"/>
</dbReference>
<dbReference type="CDD" id="cd09468">
    <property type="entry name" value="LIM1_Lhx4"/>
    <property type="match status" value="1"/>
</dbReference>
<dbReference type="CDD" id="cd09376">
    <property type="entry name" value="LIM2_Lhx3_Lhx4"/>
    <property type="match status" value="1"/>
</dbReference>
<dbReference type="FunFam" id="2.10.110.10:FF:000120">
    <property type="entry name" value="Insulin gene enhancer protein ISL-2"/>
    <property type="match status" value="1"/>
</dbReference>
<dbReference type="FunFam" id="1.10.10.60:FF:000219">
    <property type="entry name" value="LIM/homeobox protein Lhx3"/>
    <property type="match status" value="1"/>
</dbReference>
<dbReference type="FunFam" id="2.10.110.10:FF:000032">
    <property type="entry name" value="LIM/homeobox protein Lhx3"/>
    <property type="match status" value="1"/>
</dbReference>
<dbReference type="Gene3D" id="2.10.110.10">
    <property type="entry name" value="Cysteine Rich Protein"/>
    <property type="match status" value="2"/>
</dbReference>
<dbReference type="Gene3D" id="1.10.10.60">
    <property type="entry name" value="Homeodomain-like"/>
    <property type="match status" value="1"/>
</dbReference>
<dbReference type="InterPro" id="IPR001356">
    <property type="entry name" value="HD"/>
</dbReference>
<dbReference type="InterPro" id="IPR017970">
    <property type="entry name" value="Homeobox_CS"/>
</dbReference>
<dbReference type="InterPro" id="IPR009057">
    <property type="entry name" value="Homeodomain-like_sf"/>
</dbReference>
<dbReference type="InterPro" id="IPR049594">
    <property type="entry name" value="Lhx3/4-like_LIM2"/>
</dbReference>
<dbReference type="InterPro" id="IPR047956">
    <property type="entry name" value="LHX4_LIM1"/>
</dbReference>
<dbReference type="InterPro" id="IPR050453">
    <property type="entry name" value="LIM_Homeobox_TF"/>
</dbReference>
<dbReference type="InterPro" id="IPR001781">
    <property type="entry name" value="Znf_LIM"/>
</dbReference>
<dbReference type="PANTHER" id="PTHR24208">
    <property type="entry name" value="LIM/HOMEOBOX PROTEIN LHX"/>
    <property type="match status" value="1"/>
</dbReference>
<dbReference type="PANTHER" id="PTHR24208:SF116">
    <property type="entry name" value="LIM_HOMEOBOX PROTEIN LHX4"/>
    <property type="match status" value="1"/>
</dbReference>
<dbReference type="Pfam" id="PF00046">
    <property type="entry name" value="Homeodomain"/>
    <property type="match status" value="1"/>
</dbReference>
<dbReference type="Pfam" id="PF00412">
    <property type="entry name" value="LIM"/>
    <property type="match status" value="2"/>
</dbReference>
<dbReference type="SMART" id="SM00389">
    <property type="entry name" value="HOX"/>
    <property type="match status" value="1"/>
</dbReference>
<dbReference type="SMART" id="SM00132">
    <property type="entry name" value="LIM"/>
    <property type="match status" value="2"/>
</dbReference>
<dbReference type="SUPFAM" id="SSF57716">
    <property type="entry name" value="Glucocorticoid receptor-like (DNA-binding domain)"/>
    <property type="match status" value="2"/>
</dbReference>
<dbReference type="SUPFAM" id="SSF46689">
    <property type="entry name" value="Homeodomain-like"/>
    <property type="match status" value="1"/>
</dbReference>
<dbReference type="PROSITE" id="PS00027">
    <property type="entry name" value="HOMEOBOX_1"/>
    <property type="match status" value="1"/>
</dbReference>
<dbReference type="PROSITE" id="PS50071">
    <property type="entry name" value="HOMEOBOX_2"/>
    <property type="match status" value="1"/>
</dbReference>
<dbReference type="PROSITE" id="PS00478">
    <property type="entry name" value="LIM_DOMAIN_1"/>
    <property type="match status" value="2"/>
</dbReference>
<dbReference type="PROSITE" id="PS50023">
    <property type="entry name" value="LIM_DOMAIN_2"/>
    <property type="match status" value="2"/>
</dbReference>
<sequence>MMQSAAVPAEGAVKGLPEMLGVPMQQIPQCAGCNQHILDKFILKVLDRHWHSSCLKCADCQMQLADRCFSRAGSVYCKEDFFKRFGTKCTACQQGIPPTQVVRKAQDFVYHLHCFACIICNRQLATGDEFYLMEDGRLVCKEDYETAKQNDDSEAGAKRPRTTITAKQLETLKNAYKNSPKPARHVREQLSSETGLDMRVVQVWFQNRRAKEKRLKKDAGRHRWGQFYKSVKRSRGGSKQEKESSAEDCGVSDSELSFREDQILSELGHTNRIYGNVGDVTGGQLMNGSFSMDGTGQSYQDLRDGSPYGIPQSPSSISSLPSHAPLLNGLDYTVDSNLGIIAHAGQGVSQTLRAMAGGPTSDLSTGSSVGYPDFPTSPASWLDEMDHPPF</sequence>
<reference key="1">
    <citation type="journal article" date="2004" name="Genome Res.">
        <title>The status, quality, and expansion of the NIH full-length cDNA project: the Mammalian Gene Collection (MGC).</title>
        <authorList>
            <consortium name="The MGC Project Team"/>
        </authorList>
    </citation>
    <scope>NUCLEOTIDE SEQUENCE [LARGE SCALE MRNA]</scope>
    <source>
        <tissue>Eye</tissue>
    </source>
</reference>
<reference key="2">
    <citation type="submission" date="1999-03" db="EMBL/GenBank/DDBJ databases">
        <authorList>
            <person name="Sakai T."/>
            <person name="Kawaguchi A."/>
            <person name="Nagashima M."/>
        </authorList>
    </citation>
    <scope>NUCLEOTIDE SEQUENCE [MRNA] OF 23-390</scope>
</reference>
<reference key="3">
    <citation type="journal article" date="1997" name="Genomics">
        <title>Lhx4, a LIM homeobox gene.</title>
        <authorList>
            <person name="Yamashita T."/>
            <person name="Moriyama K."/>
            <person name="Sheng H.Z."/>
            <person name="Westphal H."/>
        </authorList>
    </citation>
    <scope>NUCLEOTIDE SEQUENCE [MRNA] OF 30-219</scope>
    <source>
        <strain>FVB/N</strain>
        <tissue>Embryo</tissue>
    </source>
</reference>
<reference key="4">
    <citation type="journal article" date="1994" name="EMBO J.">
        <title>Gsh-4 encodes a LIM-type homeodomain, is expressed in the developing central nervous system and is required for early postnatal survival.</title>
        <authorList>
            <person name="Li H."/>
            <person name="Witte D.P."/>
            <person name="Branford W.W."/>
            <person name="Aronow B.J."/>
            <person name="Weinstein M."/>
            <person name="Kaur S."/>
            <person name="Wert S."/>
            <person name="Singh G."/>
            <person name="Schreiner C.M."/>
            <person name="Whitsett J.A."/>
            <person name="Scott W.J. Jr."/>
            <person name="Potter S.S."/>
        </authorList>
    </citation>
    <scope>NUCLEOTIDE SEQUENCE [MRNA] OF 161-390</scope>
</reference>
<keyword id="KW-0002">3D-structure</keyword>
<keyword id="KW-0238">DNA-binding</keyword>
<keyword id="KW-0371">Homeobox</keyword>
<keyword id="KW-0440">LIM domain</keyword>
<keyword id="KW-0479">Metal-binding</keyword>
<keyword id="KW-0539">Nucleus</keyword>
<keyword id="KW-1185">Reference proteome</keyword>
<keyword id="KW-0677">Repeat</keyword>
<keyword id="KW-0804">Transcription</keyword>
<keyword id="KW-0805">Transcription regulation</keyword>
<keyword id="KW-0862">Zinc</keyword>
<accession>P53776</accession>
<accession>O08916</accession>
<accession>Q810K7</accession>
<accession>Q9R280</accession>
<feature type="chain" id="PRO_0000075788" description="LIM/homeobox protein Lhx4">
    <location>
        <begin position="1"/>
        <end position="390"/>
    </location>
</feature>
<feature type="domain" description="LIM zinc-binding 1" evidence="3">
    <location>
        <begin position="28"/>
        <end position="87"/>
    </location>
</feature>
<feature type="domain" description="LIM zinc-binding 2" evidence="3">
    <location>
        <begin position="88"/>
        <end position="150"/>
    </location>
</feature>
<feature type="DNA-binding region" description="Homeobox" evidence="2">
    <location>
        <begin position="157"/>
        <end position="216"/>
    </location>
</feature>
<feature type="region of interest" description="Interaction with DNA" evidence="1">
    <location>
        <begin position="161"/>
        <end position="181"/>
    </location>
</feature>
<feature type="region of interest" description="Interaction with 5-mCpG DNA" evidence="1">
    <location>
        <begin position="199"/>
        <end position="211"/>
    </location>
</feature>
<feature type="region of interest" description="Disordered" evidence="4">
    <location>
        <begin position="231"/>
        <end position="253"/>
    </location>
</feature>
<feature type="region of interest" description="Disordered" evidence="4">
    <location>
        <begin position="355"/>
        <end position="390"/>
    </location>
</feature>
<feature type="sequence conflict" description="In Ref. 1; AAH49834." evidence="5" ref="1">
    <original>S</original>
    <variation>T</variation>
    <location>
        <position position="377"/>
    </location>
</feature>
<feature type="turn" evidence="6">
    <location>
        <begin position="31"/>
        <end position="33"/>
    </location>
</feature>
<feature type="strand" evidence="6">
    <location>
        <begin position="39"/>
        <end position="45"/>
    </location>
</feature>
<feature type="strand" evidence="6">
    <location>
        <begin position="48"/>
        <end position="50"/>
    </location>
</feature>
<feature type="turn" evidence="6">
    <location>
        <begin position="52"/>
        <end position="54"/>
    </location>
</feature>
<feature type="turn" evidence="6">
    <location>
        <begin position="58"/>
        <end position="60"/>
    </location>
</feature>
<feature type="strand" evidence="6">
    <location>
        <begin position="65"/>
        <end position="71"/>
    </location>
</feature>
<feature type="strand" evidence="6">
    <location>
        <begin position="74"/>
        <end position="76"/>
    </location>
</feature>
<feature type="helix" evidence="6">
    <location>
        <begin position="78"/>
        <end position="84"/>
    </location>
</feature>
<feature type="turn" evidence="6">
    <location>
        <begin position="90"/>
        <end position="92"/>
    </location>
</feature>
<feature type="strand" evidence="6">
    <location>
        <begin position="102"/>
        <end position="105"/>
    </location>
</feature>
<feature type="strand" evidence="6">
    <location>
        <begin position="108"/>
        <end position="110"/>
    </location>
</feature>
<feature type="helix" evidence="6">
    <location>
        <begin position="112"/>
        <end position="114"/>
    </location>
</feature>
<feature type="turn" evidence="6">
    <location>
        <begin position="118"/>
        <end position="120"/>
    </location>
</feature>
<feature type="strand" evidence="6">
    <location>
        <begin position="129"/>
        <end position="132"/>
    </location>
</feature>
<feature type="strand" evidence="6">
    <location>
        <begin position="138"/>
        <end position="140"/>
    </location>
</feature>
<feature type="helix" evidence="6">
    <location>
        <begin position="141"/>
        <end position="147"/>
    </location>
</feature>